<organism>
    <name type="scientific">Desulfitobacterium hafniense (strain Y51)</name>
    <dbReference type="NCBI Taxonomy" id="138119"/>
    <lineage>
        <taxon>Bacteria</taxon>
        <taxon>Bacillati</taxon>
        <taxon>Bacillota</taxon>
        <taxon>Clostridia</taxon>
        <taxon>Eubacteriales</taxon>
        <taxon>Desulfitobacteriaceae</taxon>
        <taxon>Desulfitobacterium</taxon>
    </lineage>
</organism>
<evidence type="ECO:0000255" key="1">
    <source>
        <dbReference type="HAMAP-Rule" id="MF_01318"/>
    </source>
</evidence>
<evidence type="ECO:0000305" key="2"/>
<sequence length="230" mass="24623">MAKVGKNYQEAVKAFDRAALHEPMEALAVVKKIAKAKFDETVEVAFKLGIDTRHADQQIRGALVLPHGTGKTRSVLVFAKGDKAKEAEAAGADFVGAEDMIAKIEQGWFGFDVVVATPDMMGMVGKLGRVLGPKGLMPNPKTGTVTFDVAKAVKEIKAGKIEYRADKAGIIHAPIGKVSFSEEQLYQNYKVLVETLVKAKPAAAKGQYIRSVTVSSTMGPGVRINPVKAN</sequence>
<keyword id="KW-1185">Reference proteome</keyword>
<keyword id="KW-0678">Repressor</keyword>
<keyword id="KW-0687">Ribonucleoprotein</keyword>
<keyword id="KW-0689">Ribosomal protein</keyword>
<keyword id="KW-0694">RNA-binding</keyword>
<keyword id="KW-0699">rRNA-binding</keyword>
<keyword id="KW-0810">Translation regulation</keyword>
<keyword id="KW-0820">tRNA-binding</keyword>
<comment type="function">
    <text evidence="1">Binds directly to 23S rRNA. The L1 stalk is quite mobile in the ribosome, and is involved in E site tRNA release.</text>
</comment>
<comment type="function">
    <text evidence="1">Protein L1 is also a translational repressor protein, it controls the translation of the L11 operon by binding to its mRNA.</text>
</comment>
<comment type="subunit">
    <text evidence="1">Part of the 50S ribosomal subunit.</text>
</comment>
<comment type="similarity">
    <text evidence="1">Belongs to the universal ribosomal protein uL1 family.</text>
</comment>
<protein>
    <recommendedName>
        <fullName evidence="1">Large ribosomal subunit protein uL1</fullName>
    </recommendedName>
    <alternativeName>
        <fullName evidence="2">50S ribosomal protein L1</fullName>
    </alternativeName>
</protein>
<name>RL1_DESHY</name>
<gene>
    <name evidence="1" type="primary">rplA</name>
    <name type="ordered locus">DSY0456</name>
</gene>
<proteinExistence type="inferred from homology"/>
<reference key="1">
    <citation type="journal article" date="2006" name="J. Bacteriol.">
        <title>Complete genome sequence of the dehalorespiring bacterium Desulfitobacterium hafniense Y51 and comparison with Dehalococcoides ethenogenes 195.</title>
        <authorList>
            <person name="Nonaka H."/>
            <person name="Keresztes G."/>
            <person name="Shinoda Y."/>
            <person name="Ikenaga Y."/>
            <person name="Abe M."/>
            <person name="Naito K."/>
            <person name="Inatomi K."/>
            <person name="Furukawa K."/>
            <person name="Inui M."/>
            <person name="Yukawa H."/>
        </authorList>
    </citation>
    <scope>NUCLEOTIDE SEQUENCE [LARGE SCALE GENOMIC DNA]</scope>
    <source>
        <strain>Y51</strain>
    </source>
</reference>
<dbReference type="EMBL" id="AP008230">
    <property type="protein sequence ID" value="BAE82245.1"/>
    <property type="molecule type" value="Genomic_DNA"/>
</dbReference>
<dbReference type="RefSeq" id="WP_005810196.1">
    <property type="nucleotide sequence ID" value="NC_007907.1"/>
</dbReference>
<dbReference type="SMR" id="Q250P7"/>
<dbReference type="STRING" id="138119.DSY0456"/>
<dbReference type="KEGG" id="dsy:DSY0456"/>
<dbReference type="eggNOG" id="COG0081">
    <property type="taxonomic scope" value="Bacteria"/>
</dbReference>
<dbReference type="HOGENOM" id="CLU_062853_0_0_9"/>
<dbReference type="Proteomes" id="UP000001946">
    <property type="component" value="Chromosome"/>
</dbReference>
<dbReference type="GO" id="GO:0015934">
    <property type="term" value="C:large ribosomal subunit"/>
    <property type="evidence" value="ECO:0007669"/>
    <property type="project" value="InterPro"/>
</dbReference>
<dbReference type="GO" id="GO:0019843">
    <property type="term" value="F:rRNA binding"/>
    <property type="evidence" value="ECO:0007669"/>
    <property type="project" value="UniProtKB-UniRule"/>
</dbReference>
<dbReference type="GO" id="GO:0003735">
    <property type="term" value="F:structural constituent of ribosome"/>
    <property type="evidence" value="ECO:0007669"/>
    <property type="project" value="InterPro"/>
</dbReference>
<dbReference type="GO" id="GO:0000049">
    <property type="term" value="F:tRNA binding"/>
    <property type="evidence" value="ECO:0007669"/>
    <property type="project" value="UniProtKB-KW"/>
</dbReference>
<dbReference type="GO" id="GO:0006417">
    <property type="term" value="P:regulation of translation"/>
    <property type="evidence" value="ECO:0007669"/>
    <property type="project" value="UniProtKB-KW"/>
</dbReference>
<dbReference type="GO" id="GO:0006412">
    <property type="term" value="P:translation"/>
    <property type="evidence" value="ECO:0007669"/>
    <property type="project" value="UniProtKB-UniRule"/>
</dbReference>
<dbReference type="CDD" id="cd00403">
    <property type="entry name" value="Ribosomal_L1"/>
    <property type="match status" value="1"/>
</dbReference>
<dbReference type="FunFam" id="3.40.50.790:FF:000001">
    <property type="entry name" value="50S ribosomal protein L1"/>
    <property type="match status" value="1"/>
</dbReference>
<dbReference type="Gene3D" id="3.30.190.20">
    <property type="match status" value="1"/>
</dbReference>
<dbReference type="Gene3D" id="3.40.50.790">
    <property type="match status" value="1"/>
</dbReference>
<dbReference type="HAMAP" id="MF_01318_B">
    <property type="entry name" value="Ribosomal_uL1_B"/>
    <property type="match status" value="1"/>
</dbReference>
<dbReference type="InterPro" id="IPR005878">
    <property type="entry name" value="Ribosom_uL1_bac-type"/>
</dbReference>
<dbReference type="InterPro" id="IPR002143">
    <property type="entry name" value="Ribosomal_uL1"/>
</dbReference>
<dbReference type="InterPro" id="IPR023674">
    <property type="entry name" value="Ribosomal_uL1-like"/>
</dbReference>
<dbReference type="InterPro" id="IPR028364">
    <property type="entry name" value="Ribosomal_uL1/biogenesis"/>
</dbReference>
<dbReference type="InterPro" id="IPR016095">
    <property type="entry name" value="Ribosomal_uL1_3-a/b-sand"/>
</dbReference>
<dbReference type="InterPro" id="IPR023673">
    <property type="entry name" value="Ribosomal_uL1_CS"/>
</dbReference>
<dbReference type="NCBIfam" id="TIGR01169">
    <property type="entry name" value="rplA_bact"/>
    <property type="match status" value="1"/>
</dbReference>
<dbReference type="PANTHER" id="PTHR36427">
    <property type="entry name" value="54S RIBOSOMAL PROTEIN L1, MITOCHONDRIAL"/>
    <property type="match status" value="1"/>
</dbReference>
<dbReference type="PANTHER" id="PTHR36427:SF3">
    <property type="entry name" value="LARGE RIBOSOMAL SUBUNIT PROTEIN UL1M"/>
    <property type="match status" value="1"/>
</dbReference>
<dbReference type="Pfam" id="PF00687">
    <property type="entry name" value="Ribosomal_L1"/>
    <property type="match status" value="1"/>
</dbReference>
<dbReference type="PIRSF" id="PIRSF002155">
    <property type="entry name" value="Ribosomal_L1"/>
    <property type="match status" value="1"/>
</dbReference>
<dbReference type="SUPFAM" id="SSF56808">
    <property type="entry name" value="Ribosomal protein L1"/>
    <property type="match status" value="1"/>
</dbReference>
<dbReference type="PROSITE" id="PS01199">
    <property type="entry name" value="RIBOSOMAL_L1"/>
    <property type="match status" value="1"/>
</dbReference>
<accession>Q250P7</accession>
<feature type="chain" id="PRO_0000308000" description="Large ribosomal subunit protein uL1">
    <location>
        <begin position="1"/>
        <end position="230"/>
    </location>
</feature>